<evidence type="ECO:0000255" key="1">
    <source>
        <dbReference type="HAMAP-Rule" id="MF_00563"/>
    </source>
</evidence>
<reference key="1">
    <citation type="journal article" date="2003" name="Nature">
        <title>The genome of a motile marine Synechococcus.</title>
        <authorList>
            <person name="Palenik B."/>
            <person name="Brahamsha B."/>
            <person name="Larimer F.W."/>
            <person name="Land M.L."/>
            <person name="Hauser L."/>
            <person name="Chain P."/>
            <person name="Lamerdin J.E."/>
            <person name="Regala W."/>
            <person name="Allen E.E."/>
            <person name="McCarren J."/>
            <person name="Paulsen I.T."/>
            <person name="Dufresne A."/>
            <person name="Partensky F."/>
            <person name="Webb E.A."/>
            <person name="Waterbury J."/>
        </authorList>
    </citation>
    <scope>NUCLEOTIDE SEQUENCE [LARGE SCALE GENOMIC DNA]</scope>
    <source>
        <strain>WH8102</strain>
    </source>
</reference>
<sequence length="476" mass="52249">MVAAPTTATELKLGVDCVIADINQAAFGRKELDIAETEMPGLMALREKYGTEKPLKGARIAGSLHMTIQTACLIETLVELGAEVRWASCNIFSTQDHAAAAIAAQNIPVFAVKGETLEEYWEYTHRILEWGDGGSPNMILDDGGDATGLVMLGSKAEQDITVLDNPSNEEETFLFASIKKKLAQDPTFYSRTKAEIQGVTEETTTGVARLYKMQKSGELPFPAINVNDSVTKSKFDNLYGCRESLVDSIKRATDVMVAGKQALVMGYGDVGKGSAQSLRGLGATVCIAEVDPICALQAAMEGYRVVRLEDVVEEMDIFVTATGNYQVIRNEHLEKMKDEAIVCNIGHFDNEIDVASLKGYEWDNIKPQVDHITLPSGNRIILLAEGRLVNLGCATGHPSFVMSNSFTNQVLAQIELFTKGNEYGKEVYVLPKHLDEMVARLHLDRIGAKLTELSKDQADYINVPVEGPYKPDHYRY</sequence>
<feature type="chain" id="PRO_0000116993" description="Adenosylhomocysteinase">
    <location>
        <begin position="1"/>
        <end position="476"/>
    </location>
</feature>
<feature type="binding site" evidence="1">
    <location>
        <position position="67"/>
    </location>
    <ligand>
        <name>substrate</name>
    </ligand>
</feature>
<feature type="binding site" evidence="1">
    <location>
        <position position="142"/>
    </location>
    <ligand>
        <name>substrate</name>
    </ligand>
</feature>
<feature type="binding site" evidence="1">
    <location>
        <position position="202"/>
    </location>
    <ligand>
        <name>substrate</name>
    </ligand>
</feature>
<feature type="binding site" evidence="1">
    <location>
        <begin position="203"/>
        <end position="205"/>
    </location>
    <ligand>
        <name>NAD(+)</name>
        <dbReference type="ChEBI" id="CHEBI:57540"/>
    </ligand>
</feature>
<feature type="binding site" evidence="1">
    <location>
        <position position="232"/>
    </location>
    <ligand>
        <name>substrate</name>
    </ligand>
</feature>
<feature type="binding site" evidence="1">
    <location>
        <position position="236"/>
    </location>
    <ligand>
        <name>substrate</name>
    </ligand>
</feature>
<feature type="binding site" evidence="1">
    <location>
        <position position="237"/>
    </location>
    <ligand>
        <name>NAD(+)</name>
        <dbReference type="ChEBI" id="CHEBI:57540"/>
    </ligand>
</feature>
<feature type="binding site" evidence="1">
    <location>
        <begin position="266"/>
        <end position="271"/>
    </location>
    <ligand>
        <name>NAD(+)</name>
        <dbReference type="ChEBI" id="CHEBI:57540"/>
    </ligand>
</feature>
<feature type="binding site" evidence="1">
    <location>
        <position position="289"/>
    </location>
    <ligand>
        <name>NAD(+)</name>
        <dbReference type="ChEBI" id="CHEBI:57540"/>
    </ligand>
</feature>
<feature type="binding site" evidence="1">
    <location>
        <position position="324"/>
    </location>
    <ligand>
        <name>NAD(+)</name>
        <dbReference type="ChEBI" id="CHEBI:57540"/>
    </ligand>
</feature>
<feature type="binding site" evidence="1">
    <location>
        <begin position="345"/>
        <end position="347"/>
    </location>
    <ligand>
        <name>NAD(+)</name>
        <dbReference type="ChEBI" id="CHEBI:57540"/>
    </ligand>
</feature>
<feature type="binding site" evidence="1">
    <location>
        <position position="390"/>
    </location>
    <ligand>
        <name>NAD(+)</name>
        <dbReference type="ChEBI" id="CHEBI:57540"/>
    </ligand>
</feature>
<accession>Q7U9Y3</accession>
<dbReference type="EC" id="3.13.2.1" evidence="1"/>
<dbReference type="EMBL" id="BX569689">
    <property type="protein sequence ID" value="CAE06634.1"/>
    <property type="molecule type" value="Genomic_DNA"/>
</dbReference>
<dbReference type="RefSeq" id="WP_011126997.1">
    <property type="nucleotide sequence ID" value="NC_005070.1"/>
</dbReference>
<dbReference type="SMR" id="Q7U9Y3"/>
<dbReference type="STRING" id="84588.SYNW0119"/>
<dbReference type="KEGG" id="syw:SYNW0119"/>
<dbReference type="eggNOG" id="COG0499">
    <property type="taxonomic scope" value="Bacteria"/>
</dbReference>
<dbReference type="HOGENOM" id="CLU_025194_2_1_3"/>
<dbReference type="UniPathway" id="UPA00314">
    <property type="reaction ID" value="UER00076"/>
</dbReference>
<dbReference type="Proteomes" id="UP000001422">
    <property type="component" value="Chromosome"/>
</dbReference>
<dbReference type="GO" id="GO:0005829">
    <property type="term" value="C:cytosol"/>
    <property type="evidence" value="ECO:0007669"/>
    <property type="project" value="TreeGrafter"/>
</dbReference>
<dbReference type="GO" id="GO:0004013">
    <property type="term" value="F:adenosylhomocysteinase activity"/>
    <property type="evidence" value="ECO:0007669"/>
    <property type="project" value="UniProtKB-UniRule"/>
</dbReference>
<dbReference type="GO" id="GO:0071269">
    <property type="term" value="P:L-homocysteine biosynthetic process"/>
    <property type="evidence" value="ECO:0007669"/>
    <property type="project" value="UniProtKB-UniRule"/>
</dbReference>
<dbReference type="GO" id="GO:0006730">
    <property type="term" value="P:one-carbon metabolic process"/>
    <property type="evidence" value="ECO:0007669"/>
    <property type="project" value="UniProtKB-KW"/>
</dbReference>
<dbReference type="GO" id="GO:0033353">
    <property type="term" value="P:S-adenosylmethionine cycle"/>
    <property type="evidence" value="ECO:0007669"/>
    <property type="project" value="TreeGrafter"/>
</dbReference>
<dbReference type="CDD" id="cd00401">
    <property type="entry name" value="SAHH"/>
    <property type="match status" value="1"/>
</dbReference>
<dbReference type="FunFam" id="3.40.50.720:FF:000004">
    <property type="entry name" value="Adenosylhomocysteinase"/>
    <property type="match status" value="1"/>
</dbReference>
<dbReference type="Gene3D" id="3.40.50.1480">
    <property type="entry name" value="Adenosylhomocysteinase-like"/>
    <property type="match status" value="1"/>
</dbReference>
<dbReference type="Gene3D" id="3.40.50.720">
    <property type="entry name" value="NAD(P)-binding Rossmann-like Domain"/>
    <property type="match status" value="1"/>
</dbReference>
<dbReference type="HAMAP" id="MF_00563">
    <property type="entry name" value="AdoHcyase"/>
    <property type="match status" value="1"/>
</dbReference>
<dbReference type="InterPro" id="IPR042172">
    <property type="entry name" value="Adenosylhomocyst_ase-like_sf"/>
</dbReference>
<dbReference type="InterPro" id="IPR000043">
    <property type="entry name" value="Adenosylhomocysteinase-like"/>
</dbReference>
<dbReference type="InterPro" id="IPR015878">
    <property type="entry name" value="Ado_hCys_hydrolase_NAD-bd"/>
</dbReference>
<dbReference type="InterPro" id="IPR036291">
    <property type="entry name" value="NAD(P)-bd_dom_sf"/>
</dbReference>
<dbReference type="InterPro" id="IPR020082">
    <property type="entry name" value="S-Ado-L-homoCys_hydrolase_CS"/>
</dbReference>
<dbReference type="NCBIfam" id="TIGR00936">
    <property type="entry name" value="ahcY"/>
    <property type="match status" value="1"/>
</dbReference>
<dbReference type="NCBIfam" id="NF004005">
    <property type="entry name" value="PRK05476.2-3"/>
    <property type="match status" value="1"/>
</dbReference>
<dbReference type="PANTHER" id="PTHR23420">
    <property type="entry name" value="ADENOSYLHOMOCYSTEINASE"/>
    <property type="match status" value="1"/>
</dbReference>
<dbReference type="PANTHER" id="PTHR23420:SF0">
    <property type="entry name" value="ADENOSYLHOMOCYSTEINASE"/>
    <property type="match status" value="1"/>
</dbReference>
<dbReference type="Pfam" id="PF05221">
    <property type="entry name" value="AdoHcyase"/>
    <property type="match status" value="1"/>
</dbReference>
<dbReference type="Pfam" id="PF00670">
    <property type="entry name" value="AdoHcyase_NAD"/>
    <property type="match status" value="1"/>
</dbReference>
<dbReference type="PIRSF" id="PIRSF001109">
    <property type="entry name" value="Ad_hcy_hydrolase"/>
    <property type="match status" value="1"/>
</dbReference>
<dbReference type="SMART" id="SM00996">
    <property type="entry name" value="AdoHcyase"/>
    <property type="match status" value="1"/>
</dbReference>
<dbReference type="SMART" id="SM00997">
    <property type="entry name" value="AdoHcyase_NAD"/>
    <property type="match status" value="1"/>
</dbReference>
<dbReference type="SUPFAM" id="SSF52283">
    <property type="entry name" value="Formate/glycerate dehydrogenase catalytic domain-like"/>
    <property type="match status" value="1"/>
</dbReference>
<dbReference type="SUPFAM" id="SSF51735">
    <property type="entry name" value="NAD(P)-binding Rossmann-fold domains"/>
    <property type="match status" value="1"/>
</dbReference>
<dbReference type="PROSITE" id="PS00738">
    <property type="entry name" value="ADOHCYASE_1"/>
    <property type="match status" value="1"/>
</dbReference>
<dbReference type="PROSITE" id="PS00739">
    <property type="entry name" value="ADOHCYASE_2"/>
    <property type="match status" value="1"/>
</dbReference>
<comment type="function">
    <text evidence="1">May play a key role in the regulation of the intracellular concentration of adenosylhomocysteine.</text>
</comment>
<comment type="catalytic activity">
    <reaction evidence="1">
        <text>S-adenosyl-L-homocysteine + H2O = L-homocysteine + adenosine</text>
        <dbReference type="Rhea" id="RHEA:21708"/>
        <dbReference type="ChEBI" id="CHEBI:15377"/>
        <dbReference type="ChEBI" id="CHEBI:16335"/>
        <dbReference type="ChEBI" id="CHEBI:57856"/>
        <dbReference type="ChEBI" id="CHEBI:58199"/>
        <dbReference type="EC" id="3.13.2.1"/>
    </reaction>
</comment>
<comment type="cofactor">
    <cofactor evidence="1">
        <name>NAD(+)</name>
        <dbReference type="ChEBI" id="CHEBI:57540"/>
    </cofactor>
    <text evidence="1">Binds 1 NAD(+) per subunit.</text>
</comment>
<comment type="pathway">
    <text evidence="1">Amino-acid biosynthesis; L-homocysteine biosynthesis; L-homocysteine from S-adenosyl-L-homocysteine: step 1/1.</text>
</comment>
<comment type="subcellular location">
    <subcellularLocation>
        <location evidence="1">Cytoplasm</location>
    </subcellularLocation>
</comment>
<comment type="similarity">
    <text evidence="1">Belongs to the adenosylhomocysteinase family.</text>
</comment>
<gene>
    <name evidence="1" type="primary">ahcY</name>
    <name type="ordered locus">SYNW0119</name>
</gene>
<keyword id="KW-0963">Cytoplasm</keyword>
<keyword id="KW-0378">Hydrolase</keyword>
<keyword id="KW-0520">NAD</keyword>
<keyword id="KW-0554">One-carbon metabolism</keyword>
<name>SAHH_PARMW</name>
<protein>
    <recommendedName>
        <fullName evidence="1">Adenosylhomocysteinase</fullName>
        <ecNumber evidence="1">3.13.2.1</ecNumber>
    </recommendedName>
    <alternativeName>
        <fullName evidence="1">S-adenosyl-L-homocysteine hydrolase</fullName>
        <shortName evidence="1">AdoHcyase</shortName>
    </alternativeName>
</protein>
<organism>
    <name type="scientific">Parasynechococcus marenigrum (strain WH8102)</name>
    <dbReference type="NCBI Taxonomy" id="84588"/>
    <lineage>
        <taxon>Bacteria</taxon>
        <taxon>Bacillati</taxon>
        <taxon>Cyanobacteriota</taxon>
        <taxon>Cyanophyceae</taxon>
        <taxon>Synechococcales</taxon>
        <taxon>Prochlorococcaceae</taxon>
        <taxon>Parasynechococcus</taxon>
        <taxon>Parasynechococcus marenigrum</taxon>
    </lineage>
</organism>
<proteinExistence type="inferred from homology"/>